<dbReference type="EMBL" id="X62567">
    <property type="protein sequence ID" value="CAA44440.1"/>
    <property type="molecule type" value="Genomic_DNA"/>
</dbReference>
<dbReference type="PIR" id="S18621">
    <property type="entry name" value="BWSMNG"/>
</dbReference>
<dbReference type="SMR" id="P29784"/>
<dbReference type="UniPathway" id="UPA00066"/>
<dbReference type="GO" id="GO:0019872">
    <property type="term" value="P:streptomycin biosynthetic process"/>
    <property type="evidence" value="ECO:0007669"/>
    <property type="project" value="UniProtKB-UniPathway"/>
</dbReference>
<dbReference type="Gene3D" id="1.20.58.840">
    <property type="match status" value="1"/>
</dbReference>
<dbReference type="Gene3D" id="3.30.200.20">
    <property type="entry name" value="Phosphorylase Kinase, domain 1"/>
    <property type="match status" value="1"/>
</dbReference>
<dbReference type="Gene3D" id="1.10.510.10">
    <property type="entry name" value="Transferase(Phosphotransferase) domain 1"/>
    <property type="match status" value="1"/>
</dbReference>
<dbReference type="InterPro" id="IPR002575">
    <property type="entry name" value="Aminoglycoside_PTrfase"/>
</dbReference>
<dbReference type="InterPro" id="IPR011009">
    <property type="entry name" value="Kinase-like_dom_sf"/>
</dbReference>
<dbReference type="Pfam" id="PF01636">
    <property type="entry name" value="APH"/>
    <property type="match status" value="1"/>
</dbReference>
<dbReference type="SUPFAM" id="SSF56112">
    <property type="entry name" value="Protein kinase-like (PK-like)"/>
    <property type="match status" value="1"/>
</dbReference>
<keyword id="KW-0045">Antibiotic biosynthesis</keyword>
<keyword id="KW-0759">Streptomycin biosynthesis</keyword>
<name>STRN_STRGR</name>
<proteinExistence type="predicted"/>
<protein>
    <recommendedName>
        <fullName>Protein StrN</fullName>
    </recommendedName>
</protein>
<feature type="chain" id="PRO_0000072286" description="Protein StrN">
    <location>
        <begin position="1"/>
        <end position="319"/>
    </location>
</feature>
<comment type="pathway">
    <text>Antibiotic biosynthesis; streptomycin biosynthesis.</text>
</comment>
<accession>P29784</accession>
<organism>
    <name type="scientific">Streptomyces griseus</name>
    <dbReference type="NCBI Taxonomy" id="1911"/>
    <lineage>
        <taxon>Bacteria</taxon>
        <taxon>Bacillati</taxon>
        <taxon>Actinomycetota</taxon>
        <taxon>Actinomycetes</taxon>
        <taxon>Kitasatosporales</taxon>
        <taxon>Streptomycetaceae</taxon>
        <taxon>Streptomyces</taxon>
    </lineage>
</organism>
<reference key="1">
    <citation type="journal article" date="1991" name="Mol. Gen. Genet.">
        <title>Genetics of streptomycin production in Streptomyces griseus: molecular structure and putative function of genes strELMB2N.</title>
        <authorList>
            <person name="Pissowotzki K."/>
            <person name="Mansouri K."/>
            <person name="Piepersberg W."/>
        </authorList>
    </citation>
    <scope>NUCLEOTIDE SEQUENCE [GENOMIC DNA]</scope>
    <source>
        <strain>N2-3-11</strain>
    </source>
</reference>
<sequence>MLASGMLLENRLVERRSIIRLVEENFRDHFPSDQELPGLEFFPLGEDSWSYRCGPLWISVRRDLDGHFPGAYEVSLLLSESGKGYVLAPLPGRNGRVVHRIADFPVVVFPYVESATTPPAPPTQEQIDLLIARLGEVHAFEPPASRPVDVPTEDFRFPFENDLDKAVQAALNGDAAAGGPYAGLLAERVDRCQGFLAELREEATRVAGECAARWRGERPALTHGDPSLANVLFTKGVDIIDWGGAMWAPPERDWAALQRVFGTAPRSRPEFLRFYELRWHLAEIAEYATRFTGPHTGDADDDAMWERLTRYLPEPRGAS</sequence>
<gene>
    <name type="primary">strN</name>
</gene>